<gene>
    <name evidence="1" type="primary">panC</name>
    <name type="ordered locus">ABAYE3174</name>
</gene>
<organism>
    <name type="scientific">Acinetobacter baumannii (strain AYE)</name>
    <dbReference type="NCBI Taxonomy" id="509173"/>
    <lineage>
        <taxon>Bacteria</taxon>
        <taxon>Pseudomonadati</taxon>
        <taxon>Pseudomonadota</taxon>
        <taxon>Gammaproteobacteria</taxon>
        <taxon>Moraxellales</taxon>
        <taxon>Moraxellaceae</taxon>
        <taxon>Acinetobacter</taxon>
        <taxon>Acinetobacter calcoaceticus/baumannii complex</taxon>
    </lineage>
</organism>
<reference key="1">
    <citation type="journal article" date="2008" name="PLoS ONE">
        <title>Comparative analysis of Acinetobacters: three genomes for three lifestyles.</title>
        <authorList>
            <person name="Vallenet D."/>
            <person name="Nordmann P."/>
            <person name="Barbe V."/>
            <person name="Poirel L."/>
            <person name="Mangenot S."/>
            <person name="Bataille E."/>
            <person name="Dossat C."/>
            <person name="Gas S."/>
            <person name="Kreimeyer A."/>
            <person name="Lenoble P."/>
            <person name="Oztas S."/>
            <person name="Poulain J."/>
            <person name="Segurens B."/>
            <person name="Robert C."/>
            <person name="Abergel C."/>
            <person name="Claverie J.-M."/>
            <person name="Raoult D."/>
            <person name="Medigue C."/>
            <person name="Weissenbach J."/>
            <person name="Cruveiller S."/>
        </authorList>
    </citation>
    <scope>NUCLEOTIDE SEQUENCE [LARGE SCALE GENOMIC DNA]</scope>
    <source>
        <strain>AYE</strain>
    </source>
</reference>
<protein>
    <recommendedName>
        <fullName evidence="1">Pantothenate synthetase</fullName>
        <shortName evidence="1">PS</shortName>
        <ecNumber evidence="1">6.3.2.1</ecNumber>
    </recommendedName>
    <alternativeName>
        <fullName evidence="1">Pantoate--beta-alanine ligase</fullName>
    </alternativeName>
    <alternativeName>
        <fullName evidence="1">Pantoate-activating enzyme</fullName>
    </alternativeName>
</protein>
<keyword id="KW-0067">ATP-binding</keyword>
<keyword id="KW-0963">Cytoplasm</keyword>
<keyword id="KW-0436">Ligase</keyword>
<keyword id="KW-0547">Nucleotide-binding</keyword>
<keyword id="KW-0566">Pantothenate biosynthesis</keyword>
<feature type="chain" id="PRO_1000118136" description="Pantothenate synthetase">
    <location>
        <begin position="1"/>
        <end position="282"/>
    </location>
</feature>
<feature type="active site" description="Proton donor" evidence="1">
    <location>
        <position position="37"/>
    </location>
</feature>
<feature type="binding site" evidence="1">
    <location>
        <begin position="30"/>
        <end position="37"/>
    </location>
    <ligand>
        <name>ATP</name>
        <dbReference type="ChEBI" id="CHEBI:30616"/>
    </ligand>
</feature>
<feature type="binding site" evidence="1">
    <location>
        <position position="61"/>
    </location>
    <ligand>
        <name>(R)-pantoate</name>
        <dbReference type="ChEBI" id="CHEBI:15980"/>
    </ligand>
</feature>
<feature type="binding site" evidence="1">
    <location>
        <position position="61"/>
    </location>
    <ligand>
        <name>beta-alanine</name>
        <dbReference type="ChEBI" id="CHEBI:57966"/>
    </ligand>
</feature>
<feature type="binding site" evidence="1">
    <location>
        <begin position="148"/>
        <end position="151"/>
    </location>
    <ligand>
        <name>ATP</name>
        <dbReference type="ChEBI" id="CHEBI:30616"/>
    </ligand>
</feature>
<feature type="binding site" evidence="1">
    <location>
        <position position="154"/>
    </location>
    <ligand>
        <name>(R)-pantoate</name>
        <dbReference type="ChEBI" id="CHEBI:15980"/>
    </ligand>
</feature>
<feature type="binding site" evidence="1">
    <location>
        <position position="177"/>
    </location>
    <ligand>
        <name>ATP</name>
        <dbReference type="ChEBI" id="CHEBI:30616"/>
    </ligand>
</feature>
<feature type="binding site" evidence="1">
    <location>
        <begin position="185"/>
        <end position="188"/>
    </location>
    <ligand>
        <name>ATP</name>
        <dbReference type="ChEBI" id="CHEBI:30616"/>
    </ligand>
</feature>
<accession>B0V5P7</accession>
<evidence type="ECO:0000255" key="1">
    <source>
        <dbReference type="HAMAP-Rule" id="MF_00158"/>
    </source>
</evidence>
<dbReference type="EC" id="6.3.2.1" evidence="1"/>
<dbReference type="EMBL" id="CU459141">
    <property type="protein sequence ID" value="CAM87983.1"/>
    <property type="molecule type" value="Genomic_DNA"/>
</dbReference>
<dbReference type="RefSeq" id="WP_000846362.1">
    <property type="nucleotide sequence ID" value="NZ_JBDGFB010000020.1"/>
</dbReference>
<dbReference type="SMR" id="B0V5P7"/>
<dbReference type="EnsemblBacteria" id="CAM87983">
    <property type="protein sequence ID" value="CAM87983"/>
    <property type="gene ID" value="ABAYE3174"/>
</dbReference>
<dbReference type="GeneID" id="92892565"/>
<dbReference type="KEGG" id="aby:ABAYE3174"/>
<dbReference type="HOGENOM" id="CLU_047148_0_0_6"/>
<dbReference type="UniPathway" id="UPA00028">
    <property type="reaction ID" value="UER00005"/>
</dbReference>
<dbReference type="GO" id="GO:0005829">
    <property type="term" value="C:cytosol"/>
    <property type="evidence" value="ECO:0007669"/>
    <property type="project" value="TreeGrafter"/>
</dbReference>
<dbReference type="GO" id="GO:0005524">
    <property type="term" value="F:ATP binding"/>
    <property type="evidence" value="ECO:0007669"/>
    <property type="project" value="UniProtKB-KW"/>
</dbReference>
<dbReference type="GO" id="GO:0004592">
    <property type="term" value="F:pantoate-beta-alanine ligase activity"/>
    <property type="evidence" value="ECO:0007669"/>
    <property type="project" value="UniProtKB-UniRule"/>
</dbReference>
<dbReference type="GO" id="GO:0015940">
    <property type="term" value="P:pantothenate biosynthetic process"/>
    <property type="evidence" value="ECO:0007669"/>
    <property type="project" value="UniProtKB-UniRule"/>
</dbReference>
<dbReference type="CDD" id="cd00560">
    <property type="entry name" value="PanC"/>
    <property type="match status" value="1"/>
</dbReference>
<dbReference type="FunFam" id="3.40.50.620:FF:000013">
    <property type="entry name" value="Pantothenate synthetase"/>
    <property type="match status" value="1"/>
</dbReference>
<dbReference type="Gene3D" id="3.40.50.620">
    <property type="entry name" value="HUPs"/>
    <property type="match status" value="1"/>
</dbReference>
<dbReference type="Gene3D" id="3.30.1300.10">
    <property type="entry name" value="Pantoate-beta-alanine ligase, C-terminal domain"/>
    <property type="match status" value="1"/>
</dbReference>
<dbReference type="HAMAP" id="MF_00158">
    <property type="entry name" value="PanC"/>
    <property type="match status" value="1"/>
</dbReference>
<dbReference type="InterPro" id="IPR004821">
    <property type="entry name" value="Cyt_trans-like"/>
</dbReference>
<dbReference type="InterPro" id="IPR003721">
    <property type="entry name" value="Pantoate_ligase"/>
</dbReference>
<dbReference type="InterPro" id="IPR042176">
    <property type="entry name" value="Pantoate_ligase_C"/>
</dbReference>
<dbReference type="InterPro" id="IPR014729">
    <property type="entry name" value="Rossmann-like_a/b/a_fold"/>
</dbReference>
<dbReference type="NCBIfam" id="TIGR00125">
    <property type="entry name" value="cyt_tran_rel"/>
    <property type="match status" value="1"/>
</dbReference>
<dbReference type="NCBIfam" id="TIGR00018">
    <property type="entry name" value="panC"/>
    <property type="match status" value="1"/>
</dbReference>
<dbReference type="PANTHER" id="PTHR21299">
    <property type="entry name" value="CYTIDYLATE KINASE/PANTOATE-BETA-ALANINE LIGASE"/>
    <property type="match status" value="1"/>
</dbReference>
<dbReference type="PANTHER" id="PTHR21299:SF1">
    <property type="entry name" value="PANTOATE--BETA-ALANINE LIGASE"/>
    <property type="match status" value="1"/>
</dbReference>
<dbReference type="Pfam" id="PF02569">
    <property type="entry name" value="Pantoate_ligase"/>
    <property type="match status" value="1"/>
</dbReference>
<dbReference type="SUPFAM" id="SSF52374">
    <property type="entry name" value="Nucleotidylyl transferase"/>
    <property type="match status" value="1"/>
</dbReference>
<name>PANC_ACIBY</name>
<proteinExistence type="inferred from homology"/>
<sequence length="282" mass="31066">MKTETTIQGLAASLNPARAARKIIGFVPTMGNLHEGHLTLVREAKKLCDVVVVSIFVNPTQFGPGEDFDNYPRTLEQDSRLLADVGCDIIFAPSVEQMYGTQPRLTNISVSQITDDLCGSSRPGHFDGVALVVTKLFNIVQPNYAFFGQKDYQQLAVIRQFVQDLNIPLEVIGVPIVRAEDGLALSSRNGYLTPEQRQVAPVIYQGLKQAEEQLHQGKDLQQVLADLKTLLTDNGFVVDYVEARQPNLLAASQFDRDIVLFVAAKLGGTRLIDNLQVAFTPQ</sequence>
<comment type="function">
    <text evidence="1">Catalyzes the condensation of pantoate with beta-alanine in an ATP-dependent reaction via a pantoyl-adenylate intermediate.</text>
</comment>
<comment type="catalytic activity">
    <reaction evidence="1">
        <text>(R)-pantoate + beta-alanine + ATP = (R)-pantothenate + AMP + diphosphate + H(+)</text>
        <dbReference type="Rhea" id="RHEA:10912"/>
        <dbReference type="ChEBI" id="CHEBI:15378"/>
        <dbReference type="ChEBI" id="CHEBI:15980"/>
        <dbReference type="ChEBI" id="CHEBI:29032"/>
        <dbReference type="ChEBI" id="CHEBI:30616"/>
        <dbReference type="ChEBI" id="CHEBI:33019"/>
        <dbReference type="ChEBI" id="CHEBI:57966"/>
        <dbReference type="ChEBI" id="CHEBI:456215"/>
        <dbReference type="EC" id="6.3.2.1"/>
    </reaction>
</comment>
<comment type="pathway">
    <text evidence="1">Cofactor biosynthesis; (R)-pantothenate biosynthesis; (R)-pantothenate from (R)-pantoate and beta-alanine: step 1/1.</text>
</comment>
<comment type="subunit">
    <text evidence="1">Homodimer.</text>
</comment>
<comment type="subcellular location">
    <subcellularLocation>
        <location evidence="1">Cytoplasm</location>
    </subcellularLocation>
</comment>
<comment type="miscellaneous">
    <text evidence="1">The reaction proceeds by a bi uni uni bi ping pong mechanism.</text>
</comment>
<comment type="similarity">
    <text evidence="1">Belongs to the pantothenate synthetase family.</text>
</comment>